<sequence length="474" mass="54982">MPPSGPRAALFLLPSLLLLRAVLAVPLERGAPKEENPATESPDTGLYYHRYLQEVINVLETDGHFREKLQAANAEDIKSGKLSRELDFVSHHVRTKLDELKRQEVSRLRMLLKAKMDAQQEPNIQLDHLNLLKQFEHLDPQNQHTFEARDLELLIQTATRDLAQYDAAHHEEFKRYEMLKEHERRRYLESLGEEQRKEAERKLEEQQRRHREHPKVNVPGSQAQLKEVWEELDGLDPNRFNPKTFFILHDINSDGVLDEQELEALFTKELEKVYDPKNEDDDMREMEEERLRMREHVMKNVDTNQDRLVTLEEFLASTQRKEFGDTGEGWEQGKAGVPLPMAPVLTLQTVEMHPAYTEEELRRFEEELAAREAELNAKAQRLSQETEALGRSQGRLEAQKRELQQAVLQMEQRKQQQQSHNNPAPGPEGQLKFHPDTDDVPVPAPAGDQKDVDASEKKVPEQTPEPPQLDSQHL</sequence>
<gene>
    <name type="primary">NUCB1</name>
</gene>
<reference key="1">
    <citation type="submission" date="2006-08" db="EMBL/GenBank/DDBJ databases">
        <authorList>
            <consortium name="NIH - Mammalian Gene Collection (MGC) project"/>
        </authorList>
    </citation>
    <scope>NUCLEOTIDE SEQUENCE [LARGE SCALE MRNA]</scope>
    <source>
        <strain>Hereford</strain>
        <tissue>Fetal muscle</tissue>
    </source>
</reference>
<reference key="2">
    <citation type="journal article" date="1995" name="J. Biol. Chem.">
        <title>Isolation, characterization, and primary structure of a calcium-binding 63-kDa bone protein.</title>
        <authorList>
            <person name="Wendel M."/>
            <person name="Sommarin Y."/>
            <person name="Bergman T."/>
            <person name="Heinegaard D."/>
        </authorList>
    </citation>
    <scope>PROTEIN SEQUENCE OF 25-32; 111-115 AND 411-418</scope>
    <scope>FUNCTION</scope>
    <scope>TISSUE SPECIFICITY</scope>
</reference>
<dbReference type="EMBL" id="BC120433">
    <property type="protein sequence ID" value="AAI20434.1"/>
    <property type="molecule type" value="mRNA"/>
</dbReference>
<dbReference type="RefSeq" id="NP_001068667.1">
    <property type="nucleotide sequence ID" value="NM_001075199.1"/>
</dbReference>
<dbReference type="RefSeq" id="XP_010813309.1">
    <property type="nucleotide sequence ID" value="XM_010815007.1"/>
</dbReference>
<dbReference type="BMRB" id="Q0P569"/>
<dbReference type="SMR" id="Q0P569"/>
<dbReference type="FunCoup" id="Q0P569">
    <property type="interactions" value="2257"/>
</dbReference>
<dbReference type="STRING" id="9913.ENSBTAP00000003073"/>
<dbReference type="PaxDb" id="9913-ENSBTAP00000003073"/>
<dbReference type="PeptideAtlas" id="Q0P569"/>
<dbReference type="Ensembl" id="ENSBTAT00000003073.7">
    <property type="protein sequence ID" value="ENSBTAP00000003073.7"/>
    <property type="gene ID" value="ENSBTAG00000002378.7"/>
</dbReference>
<dbReference type="GeneID" id="505351"/>
<dbReference type="KEGG" id="bta:505351"/>
<dbReference type="CTD" id="4924"/>
<dbReference type="VGNC" id="VGNC:32318">
    <property type="gene designation" value="NUCB1"/>
</dbReference>
<dbReference type="eggNOG" id="KOG3866">
    <property type="taxonomic scope" value="Eukaryota"/>
</dbReference>
<dbReference type="GeneTree" id="ENSGT00390000001927"/>
<dbReference type="HOGENOM" id="CLU_031153_1_0_1"/>
<dbReference type="InParanoid" id="Q0P569"/>
<dbReference type="OrthoDB" id="5982823at2759"/>
<dbReference type="TreeFam" id="TF323218"/>
<dbReference type="Proteomes" id="UP000009136">
    <property type="component" value="Chromosome 18"/>
</dbReference>
<dbReference type="GO" id="GO:0005793">
    <property type="term" value="C:endoplasmic reticulum-Golgi intermediate compartment"/>
    <property type="evidence" value="ECO:0000318"/>
    <property type="project" value="GO_Central"/>
</dbReference>
<dbReference type="GO" id="GO:0005576">
    <property type="term" value="C:extracellular region"/>
    <property type="evidence" value="ECO:0007669"/>
    <property type="project" value="UniProtKB-SubCell"/>
</dbReference>
<dbReference type="GO" id="GO:0005794">
    <property type="term" value="C:Golgi apparatus"/>
    <property type="evidence" value="ECO:0007669"/>
    <property type="project" value="UniProtKB-SubCell"/>
</dbReference>
<dbReference type="GO" id="GO:0016020">
    <property type="term" value="C:membrane"/>
    <property type="evidence" value="ECO:0007669"/>
    <property type="project" value="UniProtKB-KW"/>
</dbReference>
<dbReference type="GO" id="GO:0005509">
    <property type="term" value="F:calcium ion binding"/>
    <property type="evidence" value="ECO:0000318"/>
    <property type="project" value="GO_Central"/>
</dbReference>
<dbReference type="GO" id="GO:0003677">
    <property type="term" value="F:DNA binding"/>
    <property type="evidence" value="ECO:0007669"/>
    <property type="project" value="UniProtKB-KW"/>
</dbReference>
<dbReference type="GO" id="GO:0001965">
    <property type="term" value="F:G-protein alpha-subunit binding"/>
    <property type="evidence" value="ECO:0000250"/>
    <property type="project" value="UniProtKB"/>
</dbReference>
<dbReference type="GO" id="GO:0005085">
    <property type="term" value="F:guanyl-nucleotide exchange factor activity"/>
    <property type="evidence" value="ECO:0000250"/>
    <property type="project" value="UniProtKB"/>
</dbReference>
<dbReference type="GO" id="GO:0007264">
    <property type="term" value="P:small GTPase-mediated signal transduction"/>
    <property type="evidence" value="ECO:0000250"/>
    <property type="project" value="UniProtKB"/>
</dbReference>
<dbReference type="FunFam" id="1.10.238.10:FF:000045">
    <property type="entry name" value="Nucleobindin 2"/>
    <property type="match status" value="1"/>
</dbReference>
<dbReference type="Gene3D" id="1.10.238.10">
    <property type="entry name" value="EF-hand"/>
    <property type="match status" value="1"/>
</dbReference>
<dbReference type="InterPro" id="IPR011992">
    <property type="entry name" value="EF-hand-dom_pair"/>
</dbReference>
<dbReference type="InterPro" id="IPR018247">
    <property type="entry name" value="EF_Hand_1_Ca_BS"/>
</dbReference>
<dbReference type="InterPro" id="IPR002048">
    <property type="entry name" value="EF_hand_dom"/>
</dbReference>
<dbReference type="InterPro" id="IPR040250">
    <property type="entry name" value="Nucleobindin"/>
</dbReference>
<dbReference type="PANTHER" id="PTHR19237">
    <property type="entry name" value="NUCLEOBINDIN"/>
    <property type="match status" value="1"/>
</dbReference>
<dbReference type="PANTHER" id="PTHR19237:SF21">
    <property type="entry name" value="NUCLEOBINDIN-1"/>
    <property type="match status" value="1"/>
</dbReference>
<dbReference type="Pfam" id="PF25434">
    <property type="entry name" value="NUCB1_N"/>
    <property type="match status" value="1"/>
</dbReference>
<dbReference type="SUPFAM" id="SSF47473">
    <property type="entry name" value="EF-hand"/>
    <property type="match status" value="1"/>
</dbReference>
<dbReference type="PROSITE" id="PS00018">
    <property type="entry name" value="EF_HAND_1"/>
    <property type="match status" value="2"/>
</dbReference>
<dbReference type="PROSITE" id="PS50222">
    <property type="entry name" value="EF_HAND_2"/>
    <property type="match status" value="2"/>
</dbReference>
<feature type="signal peptide" evidence="8">
    <location>
        <begin position="1"/>
        <end position="24"/>
    </location>
</feature>
<feature type="chain" id="PRO_0000287127" description="Nucleobindin-1">
    <location>
        <begin position="25"/>
        <end position="474"/>
    </location>
</feature>
<feature type="domain" description="EF-hand 1" evidence="6">
    <location>
        <begin position="237"/>
        <end position="272"/>
    </location>
</feature>
<feature type="domain" description="EF-hand 2" evidence="6">
    <location>
        <begin position="289"/>
        <end position="324"/>
    </location>
</feature>
<feature type="region of interest" description="Disordered" evidence="7">
    <location>
        <begin position="190"/>
        <end position="218"/>
    </location>
</feature>
<feature type="region of interest" description="Binds to GNAI2 and GNAI3" evidence="1">
    <location>
        <begin position="225"/>
        <end position="318"/>
    </location>
</feature>
<feature type="region of interest" description="Disordered" evidence="7">
    <location>
        <begin position="382"/>
        <end position="474"/>
    </location>
</feature>
<feature type="coiled-coil region" evidence="5">
    <location>
        <begin position="147"/>
        <end position="215"/>
    </location>
</feature>
<feature type="coiled-coil region" evidence="5">
    <location>
        <begin position="355"/>
        <end position="422"/>
    </location>
</feature>
<feature type="short sequence motif" description="GBA" evidence="2">
    <location>
        <begin position="300"/>
        <end position="330"/>
    </location>
</feature>
<feature type="compositionally biased region" description="Basic and acidic residues" evidence="7">
    <location>
        <begin position="190"/>
        <end position="207"/>
    </location>
</feature>
<feature type="compositionally biased region" description="Basic and acidic residues" evidence="7">
    <location>
        <begin position="448"/>
        <end position="460"/>
    </location>
</feature>
<feature type="binding site" evidence="6">
    <location>
        <position position="250"/>
    </location>
    <ligand>
        <name>Ca(2+)</name>
        <dbReference type="ChEBI" id="CHEBI:29108"/>
        <label>1</label>
    </ligand>
</feature>
<feature type="binding site" evidence="6">
    <location>
        <position position="252"/>
    </location>
    <ligand>
        <name>Ca(2+)</name>
        <dbReference type="ChEBI" id="CHEBI:29108"/>
        <label>1</label>
    </ligand>
</feature>
<feature type="binding site" evidence="6">
    <location>
        <position position="254"/>
    </location>
    <ligand>
        <name>Ca(2+)</name>
        <dbReference type="ChEBI" id="CHEBI:29108"/>
        <label>1</label>
    </ligand>
</feature>
<feature type="binding site" evidence="6">
    <location>
        <position position="261"/>
    </location>
    <ligand>
        <name>Ca(2+)</name>
        <dbReference type="ChEBI" id="CHEBI:29108"/>
        <label>1</label>
    </ligand>
</feature>
<feature type="binding site" evidence="6">
    <location>
        <position position="302"/>
    </location>
    <ligand>
        <name>Ca(2+)</name>
        <dbReference type="ChEBI" id="CHEBI:29108"/>
        <label>2</label>
    </ligand>
</feature>
<feature type="binding site" evidence="6">
    <location>
        <position position="304"/>
    </location>
    <ligand>
        <name>Ca(2+)</name>
        <dbReference type="ChEBI" id="CHEBI:29108"/>
        <label>2</label>
    </ligand>
</feature>
<feature type="binding site" evidence="6">
    <location>
        <position position="306"/>
    </location>
    <ligand>
        <name>Ca(2+)</name>
        <dbReference type="ChEBI" id="CHEBI:29108"/>
        <label>2</label>
    </ligand>
</feature>
<feature type="binding site" evidence="6">
    <location>
        <position position="313"/>
    </location>
    <ligand>
        <name>Ca(2+)</name>
        <dbReference type="ChEBI" id="CHEBI:29108"/>
        <label>2</label>
    </ligand>
</feature>
<feature type="modified residue" description="Phosphoserine" evidence="2">
    <location>
        <position position="83"/>
    </location>
</feature>
<feature type="modified residue" description="Phosphothreonine" evidence="2">
    <location>
        <position position="145"/>
    </location>
</feature>
<feature type="modified residue" description="Phosphoserine" evidence="2">
    <location>
        <position position="383"/>
    </location>
</feature>
<feature type="modified residue" description="Phosphoserine" evidence="3">
    <location>
        <position position="471"/>
    </location>
</feature>
<feature type="sequence conflict" description="In Ref. 2; AA sequence." evidence="9" ref="2">
    <original>P</original>
    <variation>A</variation>
    <location>
        <position position="32"/>
    </location>
</feature>
<accession>Q0P569</accession>
<keyword id="KW-0106">Calcium</keyword>
<keyword id="KW-0175">Coiled coil</keyword>
<keyword id="KW-0963">Cytoplasm</keyword>
<keyword id="KW-0903">Direct protein sequencing</keyword>
<keyword id="KW-0238">DNA-binding</keyword>
<keyword id="KW-0333">Golgi apparatus</keyword>
<keyword id="KW-0344">Guanine-nucleotide releasing factor</keyword>
<keyword id="KW-0472">Membrane</keyword>
<keyword id="KW-0479">Metal-binding</keyword>
<keyword id="KW-0597">Phosphoprotein</keyword>
<keyword id="KW-1185">Reference proteome</keyword>
<keyword id="KW-0677">Repeat</keyword>
<keyword id="KW-0964">Secreted</keyword>
<keyword id="KW-0732">Signal</keyword>
<proteinExistence type="evidence at protein level"/>
<evidence type="ECO:0000250" key="1"/>
<evidence type="ECO:0000250" key="2">
    <source>
        <dbReference type="UniProtKB" id="Q02818"/>
    </source>
</evidence>
<evidence type="ECO:0000250" key="3">
    <source>
        <dbReference type="UniProtKB" id="Q02819"/>
    </source>
</evidence>
<evidence type="ECO:0000250" key="4">
    <source>
        <dbReference type="UniProtKB" id="Q63083"/>
    </source>
</evidence>
<evidence type="ECO:0000255" key="5"/>
<evidence type="ECO:0000255" key="6">
    <source>
        <dbReference type="PROSITE-ProRule" id="PRU00448"/>
    </source>
</evidence>
<evidence type="ECO:0000256" key="7">
    <source>
        <dbReference type="SAM" id="MobiDB-lite"/>
    </source>
</evidence>
<evidence type="ECO:0000269" key="8">
    <source>
    </source>
</evidence>
<evidence type="ECO:0000305" key="9"/>
<comment type="function">
    <text evidence="4 8">Major calcium-binding protein of the Golgi which may have a role in calcium homeostasis (PubMed:7890746). Acts as a non-receptor guanine nucleotide exchange factor which binds to and activates alpha subunits of guanine nucleotide-binding proteins (G proteins) (By similarity).</text>
</comment>
<comment type="subunit">
    <text evidence="4">Interacts (via GBA motif) with guanine nucleotide-binding protein G(i) alpha subunits GNAI1, GNAI2 and GNAI3 with higher affinity for GNAI1 and GNAI3 than for GNAI2. Preferentially interacts with inactive rather than active GNAI3. Interaction with GNAI3 is inhibited when NUCB1 binds calcium, probably due to a conformational change which renders the GBA motif inaccessible.</text>
</comment>
<comment type="subcellular location">
    <subcellularLocation>
        <location evidence="4">Golgi apparatus</location>
        <location evidence="4">cis-Golgi network membrane</location>
        <topology evidence="4">Peripheral membrane protein</topology>
        <orientation evidence="4">Lumenal side</orientation>
    </subcellularLocation>
    <subcellularLocation>
        <location evidence="4">Cytoplasm</location>
    </subcellularLocation>
    <subcellularLocation>
        <location evidence="4">Secreted</location>
    </subcellularLocation>
    <text evidence="4">A small fraction of the protein may be cytoplasmic.</text>
</comment>
<comment type="tissue specificity">
    <text evidence="8">Expressed in bone where it is detected in the soft tissue in the center of the osteon and in the osteocyte lacuna (at protein level).</text>
</comment>
<comment type="domain">
    <text evidence="2">The EF-hand domains are unfolded in the absence of Ca(2+) and fold upon Ca(2+) addition.</text>
</comment>
<comment type="domain">
    <text evidence="4">The GBA (G-alpha binding and activating) motif mediates binding to the alpha subunits of guanine nucleotide-binding proteins (G proteins).</text>
</comment>
<comment type="similarity">
    <text evidence="9">Belongs to the nucleobindin family.</text>
</comment>
<protein>
    <recommendedName>
        <fullName>Nucleobindin-1</fullName>
    </recommendedName>
</protein>
<organism>
    <name type="scientific">Bos taurus</name>
    <name type="common">Bovine</name>
    <dbReference type="NCBI Taxonomy" id="9913"/>
    <lineage>
        <taxon>Eukaryota</taxon>
        <taxon>Metazoa</taxon>
        <taxon>Chordata</taxon>
        <taxon>Craniata</taxon>
        <taxon>Vertebrata</taxon>
        <taxon>Euteleostomi</taxon>
        <taxon>Mammalia</taxon>
        <taxon>Eutheria</taxon>
        <taxon>Laurasiatheria</taxon>
        <taxon>Artiodactyla</taxon>
        <taxon>Ruminantia</taxon>
        <taxon>Pecora</taxon>
        <taxon>Bovidae</taxon>
        <taxon>Bovinae</taxon>
        <taxon>Bos</taxon>
    </lineage>
</organism>
<name>NUCB1_BOVIN</name>